<reference key="1">
    <citation type="journal article" date="2009" name="J. Bacteriol.">
        <title>Genomic sequencing reveals regulatory mutations and recombinational events in the widely used MC4100 lineage of Escherichia coli K-12.</title>
        <authorList>
            <person name="Ferenci T."/>
            <person name="Zhou Z."/>
            <person name="Betteridge T."/>
            <person name="Ren Y."/>
            <person name="Liu Y."/>
            <person name="Feng L."/>
            <person name="Reeves P.R."/>
            <person name="Wang L."/>
        </authorList>
    </citation>
    <scope>NUCLEOTIDE SEQUENCE [LARGE SCALE GENOMIC DNA]</scope>
    <source>
        <strain>K12 / MC4100 / BW2952</strain>
    </source>
</reference>
<sequence length="159" mass="16898">MRIGHGFDVHAFGGEGPIIIGGVRIPYEKGLLAHSDGDVALHALTDALLGAAALGDIGKLFPDTDPAFKGADSRELLREAWRRIQAKGYTLGNVDVTIIAQAPKMLPHIPQMRVFIAEDLGCHMDDVNVKATTTEKLGFTGRGEGIACEAVALLIKATK</sequence>
<protein>
    <recommendedName>
        <fullName evidence="1">2-C-methyl-D-erythritol 2,4-cyclodiphosphate synthase</fullName>
        <shortName evidence="1">MECDP-synthase</shortName>
        <shortName evidence="1">MECPP-synthase</shortName>
        <shortName evidence="1">MECPS</shortName>
        <ecNumber evidence="1">4.6.1.12</ecNumber>
    </recommendedName>
</protein>
<accession>C4ZZQ0</accession>
<keyword id="KW-0414">Isoprene biosynthesis</keyword>
<keyword id="KW-0456">Lyase</keyword>
<keyword id="KW-0479">Metal-binding</keyword>
<comment type="function">
    <text evidence="1">Involved in the biosynthesis of isopentenyl diphosphate (IPP) and dimethylallyl diphosphate (DMAPP), two major building blocks of isoprenoid compounds. Catalyzes the conversion of 4-diphosphocytidyl-2-C-methyl-D-erythritol 2-phosphate (CDP-ME2P) to 2-C-methyl-D-erythritol 2,4-cyclodiphosphate (ME-CPP) with a corresponding release of cytidine 5-monophosphate (CMP).</text>
</comment>
<comment type="catalytic activity">
    <reaction evidence="1">
        <text>4-CDP-2-C-methyl-D-erythritol 2-phosphate = 2-C-methyl-D-erythritol 2,4-cyclic diphosphate + CMP</text>
        <dbReference type="Rhea" id="RHEA:23864"/>
        <dbReference type="ChEBI" id="CHEBI:57919"/>
        <dbReference type="ChEBI" id="CHEBI:58483"/>
        <dbReference type="ChEBI" id="CHEBI:60377"/>
        <dbReference type="EC" id="4.6.1.12"/>
    </reaction>
</comment>
<comment type="cofactor">
    <cofactor evidence="1">
        <name>a divalent metal cation</name>
        <dbReference type="ChEBI" id="CHEBI:60240"/>
    </cofactor>
    <text evidence="1">Binds 1 divalent metal cation per subunit.</text>
</comment>
<comment type="pathway">
    <text evidence="1">Isoprenoid biosynthesis; isopentenyl diphosphate biosynthesis via DXP pathway; isopentenyl diphosphate from 1-deoxy-D-xylulose 5-phosphate: step 4/6.</text>
</comment>
<comment type="subunit">
    <text evidence="1">Homotrimer.</text>
</comment>
<comment type="similarity">
    <text evidence="1">Belongs to the IspF family.</text>
</comment>
<organism>
    <name type="scientific">Escherichia coli (strain K12 / MC4100 / BW2952)</name>
    <dbReference type="NCBI Taxonomy" id="595496"/>
    <lineage>
        <taxon>Bacteria</taxon>
        <taxon>Pseudomonadati</taxon>
        <taxon>Pseudomonadota</taxon>
        <taxon>Gammaproteobacteria</taxon>
        <taxon>Enterobacterales</taxon>
        <taxon>Enterobacteriaceae</taxon>
        <taxon>Escherichia</taxon>
    </lineage>
</organism>
<dbReference type="EC" id="4.6.1.12" evidence="1"/>
<dbReference type="EMBL" id="CP001396">
    <property type="protein sequence ID" value="ACR61763.1"/>
    <property type="molecule type" value="Genomic_DNA"/>
</dbReference>
<dbReference type="RefSeq" id="WP_001219242.1">
    <property type="nucleotide sequence ID" value="NC_012759.1"/>
</dbReference>
<dbReference type="SMR" id="C4ZZQ0"/>
<dbReference type="GeneID" id="93779260"/>
<dbReference type="KEGG" id="ebw:BWG_2482"/>
<dbReference type="HOGENOM" id="CLU_084630_2_0_6"/>
<dbReference type="UniPathway" id="UPA00056">
    <property type="reaction ID" value="UER00095"/>
</dbReference>
<dbReference type="GO" id="GO:0008685">
    <property type="term" value="F:2-C-methyl-D-erythritol 2,4-cyclodiphosphate synthase activity"/>
    <property type="evidence" value="ECO:0007669"/>
    <property type="project" value="UniProtKB-UniRule"/>
</dbReference>
<dbReference type="GO" id="GO:0046872">
    <property type="term" value="F:metal ion binding"/>
    <property type="evidence" value="ECO:0007669"/>
    <property type="project" value="UniProtKB-KW"/>
</dbReference>
<dbReference type="GO" id="GO:0019288">
    <property type="term" value="P:isopentenyl diphosphate biosynthetic process, methylerythritol 4-phosphate pathway"/>
    <property type="evidence" value="ECO:0007669"/>
    <property type="project" value="UniProtKB-UniRule"/>
</dbReference>
<dbReference type="GO" id="GO:0016114">
    <property type="term" value="P:terpenoid biosynthetic process"/>
    <property type="evidence" value="ECO:0007669"/>
    <property type="project" value="InterPro"/>
</dbReference>
<dbReference type="CDD" id="cd00554">
    <property type="entry name" value="MECDP_synthase"/>
    <property type="match status" value="1"/>
</dbReference>
<dbReference type="FunFam" id="3.30.1330.50:FF:000001">
    <property type="entry name" value="2-C-methyl-D-erythritol 2,4-cyclodiphosphate synthase"/>
    <property type="match status" value="1"/>
</dbReference>
<dbReference type="Gene3D" id="3.30.1330.50">
    <property type="entry name" value="2-C-methyl-D-erythritol 2,4-cyclodiphosphate synthase"/>
    <property type="match status" value="1"/>
</dbReference>
<dbReference type="HAMAP" id="MF_00107">
    <property type="entry name" value="IspF"/>
    <property type="match status" value="1"/>
</dbReference>
<dbReference type="InterPro" id="IPR003526">
    <property type="entry name" value="MECDP_synthase"/>
</dbReference>
<dbReference type="InterPro" id="IPR020555">
    <property type="entry name" value="MECDP_synthase_CS"/>
</dbReference>
<dbReference type="InterPro" id="IPR036571">
    <property type="entry name" value="MECDP_synthase_sf"/>
</dbReference>
<dbReference type="NCBIfam" id="TIGR00151">
    <property type="entry name" value="ispF"/>
    <property type="match status" value="1"/>
</dbReference>
<dbReference type="PANTHER" id="PTHR43181">
    <property type="entry name" value="2-C-METHYL-D-ERYTHRITOL 2,4-CYCLODIPHOSPHATE SYNTHASE, CHLOROPLASTIC"/>
    <property type="match status" value="1"/>
</dbReference>
<dbReference type="PANTHER" id="PTHR43181:SF1">
    <property type="entry name" value="2-C-METHYL-D-ERYTHRITOL 2,4-CYCLODIPHOSPHATE SYNTHASE, CHLOROPLASTIC"/>
    <property type="match status" value="1"/>
</dbReference>
<dbReference type="Pfam" id="PF02542">
    <property type="entry name" value="YgbB"/>
    <property type="match status" value="1"/>
</dbReference>
<dbReference type="SUPFAM" id="SSF69765">
    <property type="entry name" value="IpsF-like"/>
    <property type="match status" value="1"/>
</dbReference>
<dbReference type="PROSITE" id="PS01350">
    <property type="entry name" value="ISPF"/>
    <property type="match status" value="1"/>
</dbReference>
<evidence type="ECO:0000255" key="1">
    <source>
        <dbReference type="HAMAP-Rule" id="MF_00107"/>
    </source>
</evidence>
<gene>
    <name evidence="1" type="primary">ispF</name>
    <name type="ordered locus">BWG_2482</name>
</gene>
<feature type="chain" id="PRO_1000202875" description="2-C-methyl-D-erythritol 2,4-cyclodiphosphate synthase">
    <location>
        <begin position="1"/>
        <end position="159"/>
    </location>
</feature>
<feature type="binding site" evidence="1">
    <location>
        <begin position="8"/>
        <end position="10"/>
    </location>
    <ligand>
        <name>4-CDP-2-C-methyl-D-erythritol 2-phosphate</name>
        <dbReference type="ChEBI" id="CHEBI:57919"/>
    </ligand>
</feature>
<feature type="binding site" evidence="1">
    <location>
        <position position="8"/>
    </location>
    <ligand>
        <name>a divalent metal cation</name>
        <dbReference type="ChEBI" id="CHEBI:60240"/>
    </ligand>
</feature>
<feature type="binding site" evidence="1">
    <location>
        <position position="10"/>
    </location>
    <ligand>
        <name>a divalent metal cation</name>
        <dbReference type="ChEBI" id="CHEBI:60240"/>
    </ligand>
</feature>
<feature type="binding site" evidence="1">
    <location>
        <begin position="34"/>
        <end position="35"/>
    </location>
    <ligand>
        <name>4-CDP-2-C-methyl-D-erythritol 2-phosphate</name>
        <dbReference type="ChEBI" id="CHEBI:57919"/>
    </ligand>
</feature>
<feature type="binding site" evidence="1">
    <location>
        <position position="42"/>
    </location>
    <ligand>
        <name>a divalent metal cation</name>
        <dbReference type="ChEBI" id="CHEBI:60240"/>
    </ligand>
</feature>
<feature type="binding site" evidence="1">
    <location>
        <begin position="56"/>
        <end position="58"/>
    </location>
    <ligand>
        <name>4-CDP-2-C-methyl-D-erythritol 2-phosphate</name>
        <dbReference type="ChEBI" id="CHEBI:57919"/>
    </ligand>
</feature>
<feature type="binding site" evidence="1">
    <location>
        <begin position="61"/>
        <end position="65"/>
    </location>
    <ligand>
        <name>4-CDP-2-C-methyl-D-erythritol 2-phosphate</name>
        <dbReference type="ChEBI" id="CHEBI:57919"/>
    </ligand>
</feature>
<feature type="binding site" evidence="1">
    <location>
        <begin position="100"/>
        <end position="106"/>
    </location>
    <ligand>
        <name>4-CDP-2-C-methyl-D-erythritol 2-phosphate</name>
        <dbReference type="ChEBI" id="CHEBI:57919"/>
    </ligand>
</feature>
<feature type="binding site" evidence="1">
    <location>
        <begin position="132"/>
        <end position="135"/>
    </location>
    <ligand>
        <name>4-CDP-2-C-methyl-D-erythritol 2-phosphate</name>
        <dbReference type="ChEBI" id="CHEBI:57919"/>
    </ligand>
</feature>
<feature type="binding site" evidence="1">
    <location>
        <position position="139"/>
    </location>
    <ligand>
        <name>4-CDP-2-C-methyl-D-erythritol 2-phosphate</name>
        <dbReference type="ChEBI" id="CHEBI:57919"/>
    </ligand>
</feature>
<feature type="binding site" evidence="1">
    <location>
        <position position="142"/>
    </location>
    <ligand>
        <name>4-CDP-2-C-methyl-D-erythritol 2-phosphate</name>
        <dbReference type="ChEBI" id="CHEBI:57919"/>
    </ligand>
</feature>
<feature type="site" description="Transition state stabilizer" evidence="1">
    <location>
        <position position="34"/>
    </location>
</feature>
<feature type="site" description="Transition state stabilizer" evidence="1">
    <location>
        <position position="133"/>
    </location>
</feature>
<name>ISPF_ECOBW</name>
<proteinExistence type="inferred from homology"/>